<dbReference type="EC" id="2.7.11.1"/>
<dbReference type="EMBL" id="AL035538">
    <property type="protein sequence ID" value="CAB37563.1"/>
    <property type="molecule type" value="Genomic_DNA"/>
</dbReference>
<dbReference type="EMBL" id="AL161593">
    <property type="protein sequence ID" value="CAB80488.1"/>
    <property type="molecule type" value="Genomic_DNA"/>
</dbReference>
<dbReference type="EMBL" id="CP002687">
    <property type="protein sequence ID" value="AEE86899.1"/>
    <property type="molecule type" value="Genomic_DNA"/>
</dbReference>
<dbReference type="EMBL" id="CP002687">
    <property type="protein sequence ID" value="AEE86901.1"/>
    <property type="molecule type" value="Genomic_DNA"/>
</dbReference>
<dbReference type="EMBL" id="CP002687">
    <property type="protein sequence ID" value="ANM67055.1"/>
    <property type="molecule type" value="Genomic_DNA"/>
</dbReference>
<dbReference type="EMBL" id="BX827943">
    <property type="status" value="NOT_ANNOTATED_CDS"/>
    <property type="molecule type" value="mRNA"/>
</dbReference>
<dbReference type="EMBL" id="BT029228">
    <property type="protein sequence ID" value="ABJ98560.1"/>
    <property type="molecule type" value="mRNA"/>
</dbReference>
<dbReference type="PIR" id="T05650">
    <property type="entry name" value="T05650"/>
</dbReference>
<dbReference type="RefSeq" id="NP_001190950.1">
    <molecule id="Q9SZM3-1"/>
    <property type="nucleotide sequence ID" value="NM_001204021.1"/>
</dbReference>
<dbReference type="RefSeq" id="NP_001328909.1">
    <molecule id="Q9SZM3-1"/>
    <property type="nucleotide sequence ID" value="NM_001342486.1"/>
</dbReference>
<dbReference type="RefSeq" id="NP_195536.2">
    <molecule id="Q9SZM3-2"/>
    <property type="nucleotide sequence ID" value="NM_119985.2"/>
</dbReference>
<dbReference type="SMR" id="Q9SZM3"/>
<dbReference type="BioGRID" id="15260">
    <property type="interactions" value="5"/>
</dbReference>
<dbReference type="FunCoup" id="Q9SZM3">
    <property type="interactions" value="1154"/>
</dbReference>
<dbReference type="IntAct" id="Q9SZM3">
    <property type="interactions" value="4"/>
</dbReference>
<dbReference type="STRING" id="3702.Q9SZM3"/>
<dbReference type="PaxDb" id="3702-AT4G38230.2"/>
<dbReference type="ProteomicsDB" id="220606">
    <molecule id="Q9SZM3-1"/>
</dbReference>
<dbReference type="EnsemblPlants" id="AT4G38230.1">
    <molecule id="Q9SZM3-2"/>
    <property type="protein sequence ID" value="AT4G38230.1"/>
    <property type="gene ID" value="AT4G38230"/>
</dbReference>
<dbReference type="EnsemblPlants" id="AT4G38230.3">
    <molecule id="Q9SZM3-1"/>
    <property type="protein sequence ID" value="AT4G38230.3"/>
    <property type="gene ID" value="AT4G38230"/>
</dbReference>
<dbReference type="EnsemblPlants" id="AT4G38230.4">
    <molecule id="Q9SZM3-1"/>
    <property type="protein sequence ID" value="AT4G38230.4"/>
    <property type="gene ID" value="AT4G38230"/>
</dbReference>
<dbReference type="GeneID" id="829980"/>
<dbReference type="Gramene" id="AT4G38230.1">
    <molecule id="Q9SZM3-2"/>
    <property type="protein sequence ID" value="AT4G38230.1"/>
    <property type="gene ID" value="AT4G38230"/>
</dbReference>
<dbReference type="Gramene" id="AT4G38230.3">
    <molecule id="Q9SZM3-1"/>
    <property type="protein sequence ID" value="AT4G38230.3"/>
    <property type="gene ID" value="AT4G38230"/>
</dbReference>
<dbReference type="Gramene" id="AT4G38230.4">
    <molecule id="Q9SZM3-1"/>
    <property type="protein sequence ID" value="AT4G38230.4"/>
    <property type="gene ID" value="AT4G38230"/>
</dbReference>
<dbReference type="KEGG" id="ath:AT4G38230"/>
<dbReference type="Araport" id="AT4G38230"/>
<dbReference type="TAIR" id="AT4G38230">
    <property type="gene designation" value="CPK26"/>
</dbReference>
<dbReference type="eggNOG" id="KOG0032">
    <property type="taxonomic scope" value="Eukaryota"/>
</dbReference>
<dbReference type="HOGENOM" id="CLU_000288_37_1_1"/>
<dbReference type="InParanoid" id="Q9SZM3"/>
<dbReference type="OMA" id="GRSIYEM"/>
<dbReference type="PhylomeDB" id="Q9SZM3"/>
<dbReference type="PRO" id="PR:Q9SZM3"/>
<dbReference type="Proteomes" id="UP000006548">
    <property type="component" value="Chromosome 4"/>
</dbReference>
<dbReference type="ExpressionAtlas" id="Q9SZM3">
    <property type="expression patterns" value="baseline and differential"/>
</dbReference>
<dbReference type="GO" id="GO:0005524">
    <property type="term" value="F:ATP binding"/>
    <property type="evidence" value="ECO:0007669"/>
    <property type="project" value="UniProtKB-KW"/>
</dbReference>
<dbReference type="GO" id="GO:0005509">
    <property type="term" value="F:calcium ion binding"/>
    <property type="evidence" value="ECO:0007669"/>
    <property type="project" value="InterPro"/>
</dbReference>
<dbReference type="GO" id="GO:0106310">
    <property type="term" value="F:protein serine kinase activity"/>
    <property type="evidence" value="ECO:0007669"/>
    <property type="project" value="RHEA"/>
</dbReference>
<dbReference type="GO" id="GO:0004674">
    <property type="term" value="F:protein serine/threonine kinase activity"/>
    <property type="evidence" value="ECO:0007669"/>
    <property type="project" value="UniProtKB-KW"/>
</dbReference>
<dbReference type="CDD" id="cd00051">
    <property type="entry name" value="EFh"/>
    <property type="match status" value="2"/>
</dbReference>
<dbReference type="CDD" id="cd05117">
    <property type="entry name" value="STKc_CAMK"/>
    <property type="match status" value="1"/>
</dbReference>
<dbReference type="FunFam" id="1.10.238.10:FF:000015">
    <property type="entry name" value="Calcium-dependent protein kinase 1"/>
    <property type="match status" value="1"/>
</dbReference>
<dbReference type="FunFam" id="3.30.200.20:FF:000004">
    <property type="entry name" value="Calcium-dependent protein kinase 1"/>
    <property type="match status" value="1"/>
</dbReference>
<dbReference type="FunFam" id="1.10.510.10:FF:000178">
    <property type="entry name" value="Calcium-dependent protein kinase 5"/>
    <property type="match status" value="1"/>
</dbReference>
<dbReference type="Gene3D" id="1.10.238.10">
    <property type="entry name" value="EF-hand"/>
    <property type="match status" value="1"/>
</dbReference>
<dbReference type="Gene3D" id="3.30.200.20">
    <property type="entry name" value="Phosphorylase Kinase, domain 1"/>
    <property type="match status" value="1"/>
</dbReference>
<dbReference type="Gene3D" id="1.10.510.10">
    <property type="entry name" value="Transferase(Phosphotransferase) domain 1"/>
    <property type="match status" value="1"/>
</dbReference>
<dbReference type="InterPro" id="IPR050205">
    <property type="entry name" value="CDPK_Ser/Thr_kinases"/>
</dbReference>
<dbReference type="InterPro" id="IPR011992">
    <property type="entry name" value="EF-hand-dom_pair"/>
</dbReference>
<dbReference type="InterPro" id="IPR018247">
    <property type="entry name" value="EF_Hand_1_Ca_BS"/>
</dbReference>
<dbReference type="InterPro" id="IPR002048">
    <property type="entry name" value="EF_hand_dom"/>
</dbReference>
<dbReference type="InterPro" id="IPR011009">
    <property type="entry name" value="Kinase-like_dom_sf"/>
</dbReference>
<dbReference type="InterPro" id="IPR000719">
    <property type="entry name" value="Prot_kinase_dom"/>
</dbReference>
<dbReference type="InterPro" id="IPR017441">
    <property type="entry name" value="Protein_kinase_ATP_BS"/>
</dbReference>
<dbReference type="InterPro" id="IPR008271">
    <property type="entry name" value="Ser/Thr_kinase_AS"/>
</dbReference>
<dbReference type="PANTHER" id="PTHR24349">
    <property type="entry name" value="SERINE/THREONINE-PROTEIN KINASE"/>
    <property type="match status" value="1"/>
</dbReference>
<dbReference type="Pfam" id="PF13499">
    <property type="entry name" value="EF-hand_7"/>
    <property type="match status" value="2"/>
</dbReference>
<dbReference type="Pfam" id="PF00069">
    <property type="entry name" value="Pkinase"/>
    <property type="match status" value="1"/>
</dbReference>
<dbReference type="SMART" id="SM00054">
    <property type="entry name" value="EFh"/>
    <property type="match status" value="4"/>
</dbReference>
<dbReference type="SMART" id="SM00220">
    <property type="entry name" value="S_TKc"/>
    <property type="match status" value="1"/>
</dbReference>
<dbReference type="SUPFAM" id="SSF47473">
    <property type="entry name" value="EF-hand"/>
    <property type="match status" value="1"/>
</dbReference>
<dbReference type="SUPFAM" id="SSF56112">
    <property type="entry name" value="Protein kinase-like (PK-like)"/>
    <property type="match status" value="1"/>
</dbReference>
<dbReference type="PROSITE" id="PS00018">
    <property type="entry name" value="EF_HAND_1"/>
    <property type="match status" value="4"/>
</dbReference>
<dbReference type="PROSITE" id="PS50222">
    <property type="entry name" value="EF_HAND_2"/>
    <property type="match status" value="4"/>
</dbReference>
<dbReference type="PROSITE" id="PS00107">
    <property type="entry name" value="PROTEIN_KINASE_ATP"/>
    <property type="match status" value="1"/>
</dbReference>
<dbReference type="PROSITE" id="PS50011">
    <property type="entry name" value="PROTEIN_KINASE_DOM"/>
    <property type="match status" value="1"/>
</dbReference>
<dbReference type="PROSITE" id="PS00108">
    <property type="entry name" value="PROTEIN_KINASE_ST"/>
    <property type="match status" value="1"/>
</dbReference>
<comment type="function">
    <text>May play a role in signal transduction pathways that involve calcium as a second messenger.</text>
</comment>
<comment type="catalytic activity">
    <reaction>
        <text>L-seryl-[protein] + ATP = O-phospho-L-seryl-[protein] + ADP + H(+)</text>
        <dbReference type="Rhea" id="RHEA:17989"/>
        <dbReference type="Rhea" id="RHEA-COMP:9863"/>
        <dbReference type="Rhea" id="RHEA-COMP:11604"/>
        <dbReference type="ChEBI" id="CHEBI:15378"/>
        <dbReference type="ChEBI" id="CHEBI:29999"/>
        <dbReference type="ChEBI" id="CHEBI:30616"/>
        <dbReference type="ChEBI" id="CHEBI:83421"/>
        <dbReference type="ChEBI" id="CHEBI:456216"/>
        <dbReference type="EC" id="2.7.11.1"/>
    </reaction>
</comment>
<comment type="catalytic activity">
    <reaction>
        <text>L-threonyl-[protein] + ATP = O-phospho-L-threonyl-[protein] + ADP + H(+)</text>
        <dbReference type="Rhea" id="RHEA:46608"/>
        <dbReference type="Rhea" id="RHEA-COMP:11060"/>
        <dbReference type="Rhea" id="RHEA-COMP:11605"/>
        <dbReference type="ChEBI" id="CHEBI:15378"/>
        <dbReference type="ChEBI" id="CHEBI:30013"/>
        <dbReference type="ChEBI" id="CHEBI:30616"/>
        <dbReference type="ChEBI" id="CHEBI:61977"/>
        <dbReference type="ChEBI" id="CHEBI:456216"/>
        <dbReference type="EC" id="2.7.11.1"/>
    </reaction>
</comment>
<comment type="activity regulation">
    <text evidence="1">Activated by calcium. Autophosphorylation may play an important role in the regulation of the kinase activity (By similarity).</text>
</comment>
<comment type="alternative products">
    <event type="alternative splicing"/>
    <isoform>
        <id>Q9SZM3-1</id>
        <name>1</name>
        <sequence type="displayed"/>
    </isoform>
    <isoform>
        <id>Q9SZM3-2</id>
        <name>2</name>
        <sequence type="described" ref="VSP_036291"/>
    </isoform>
</comment>
<comment type="domain">
    <text evidence="1">There are 3 contiguous domains conserved in the CDPK subfamily: a kinase domain, an autoinhibitory (junction) domain and a calmodulin-like domain. The autoinhibitory domain (288-318) inactivates kinase activity under calcium-free conditions (By similarity).</text>
</comment>
<comment type="similarity">
    <text evidence="3">Belongs to the protein kinase superfamily. Ser/Thr protein kinase family. CDPK subfamily.</text>
</comment>
<protein>
    <recommendedName>
        <fullName>Calcium-dependent protein kinase 26</fullName>
        <ecNumber>2.7.11.1</ecNumber>
    </recommendedName>
</protein>
<reference key="1">
    <citation type="journal article" date="1999" name="Nature">
        <title>Sequence and analysis of chromosome 4 of the plant Arabidopsis thaliana.</title>
        <authorList>
            <person name="Mayer K.F.X."/>
            <person name="Schueller C."/>
            <person name="Wambutt R."/>
            <person name="Murphy G."/>
            <person name="Volckaert G."/>
            <person name="Pohl T."/>
            <person name="Duesterhoeft A."/>
            <person name="Stiekema W."/>
            <person name="Entian K.-D."/>
            <person name="Terryn N."/>
            <person name="Harris B."/>
            <person name="Ansorge W."/>
            <person name="Brandt P."/>
            <person name="Grivell L.A."/>
            <person name="Rieger M."/>
            <person name="Weichselgartner M."/>
            <person name="de Simone V."/>
            <person name="Obermaier B."/>
            <person name="Mache R."/>
            <person name="Mueller M."/>
            <person name="Kreis M."/>
            <person name="Delseny M."/>
            <person name="Puigdomenech P."/>
            <person name="Watson M."/>
            <person name="Schmidtheini T."/>
            <person name="Reichert B."/>
            <person name="Portetelle D."/>
            <person name="Perez-Alonso M."/>
            <person name="Boutry M."/>
            <person name="Bancroft I."/>
            <person name="Vos P."/>
            <person name="Hoheisel J."/>
            <person name="Zimmermann W."/>
            <person name="Wedler H."/>
            <person name="Ridley P."/>
            <person name="Langham S.-A."/>
            <person name="McCullagh B."/>
            <person name="Bilham L."/>
            <person name="Robben J."/>
            <person name="van der Schueren J."/>
            <person name="Grymonprez B."/>
            <person name="Chuang Y.-J."/>
            <person name="Vandenbussche F."/>
            <person name="Braeken M."/>
            <person name="Weltjens I."/>
            <person name="Voet M."/>
            <person name="Bastiaens I."/>
            <person name="Aert R."/>
            <person name="Defoor E."/>
            <person name="Weitzenegger T."/>
            <person name="Bothe G."/>
            <person name="Ramsperger U."/>
            <person name="Hilbert H."/>
            <person name="Braun M."/>
            <person name="Holzer E."/>
            <person name="Brandt A."/>
            <person name="Peters S."/>
            <person name="van Staveren M."/>
            <person name="Dirkse W."/>
            <person name="Mooijman P."/>
            <person name="Klein Lankhorst R."/>
            <person name="Rose M."/>
            <person name="Hauf J."/>
            <person name="Koetter P."/>
            <person name="Berneiser S."/>
            <person name="Hempel S."/>
            <person name="Feldpausch M."/>
            <person name="Lamberth S."/>
            <person name="Van den Daele H."/>
            <person name="De Keyser A."/>
            <person name="Buysshaert C."/>
            <person name="Gielen J."/>
            <person name="Villarroel R."/>
            <person name="De Clercq R."/>
            <person name="van Montagu M."/>
            <person name="Rogers J."/>
            <person name="Cronin A."/>
            <person name="Quail M.A."/>
            <person name="Bray-Allen S."/>
            <person name="Clark L."/>
            <person name="Doggett J."/>
            <person name="Hall S."/>
            <person name="Kay M."/>
            <person name="Lennard N."/>
            <person name="McLay K."/>
            <person name="Mayes R."/>
            <person name="Pettett A."/>
            <person name="Rajandream M.A."/>
            <person name="Lyne M."/>
            <person name="Benes V."/>
            <person name="Rechmann S."/>
            <person name="Borkova D."/>
            <person name="Bloecker H."/>
            <person name="Scharfe M."/>
            <person name="Grimm M."/>
            <person name="Loehnert T.-H."/>
            <person name="Dose S."/>
            <person name="de Haan M."/>
            <person name="Maarse A.C."/>
            <person name="Schaefer M."/>
            <person name="Mueller-Auer S."/>
            <person name="Gabel C."/>
            <person name="Fuchs M."/>
            <person name="Fartmann B."/>
            <person name="Granderath K."/>
            <person name="Dauner D."/>
            <person name="Herzl A."/>
            <person name="Neumann S."/>
            <person name="Argiriou A."/>
            <person name="Vitale D."/>
            <person name="Liguori R."/>
            <person name="Piravandi E."/>
            <person name="Massenet O."/>
            <person name="Quigley F."/>
            <person name="Clabauld G."/>
            <person name="Muendlein A."/>
            <person name="Felber R."/>
            <person name="Schnabl S."/>
            <person name="Hiller R."/>
            <person name="Schmidt W."/>
            <person name="Lecharny A."/>
            <person name="Aubourg S."/>
            <person name="Chefdor F."/>
            <person name="Cooke R."/>
            <person name="Berger C."/>
            <person name="Monfort A."/>
            <person name="Casacuberta E."/>
            <person name="Gibbons T."/>
            <person name="Weber N."/>
            <person name="Vandenbol M."/>
            <person name="Bargues M."/>
            <person name="Terol J."/>
            <person name="Torres A."/>
            <person name="Perez-Perez A."/>
            <person name="Purnelle B."/>
            <person name="Bent E."/>
            <person name="Johnson S."/>
            <person name="Tacon D."/>
            <person name="Jesse T."/>
            <person name="Heijnen L."/>
            <person name="Schwarz S."/>
            <person name="Scholler P."/>
            <person name="Heber S."/>
            <person name="Francs P."/>
            <person name="Bielke C."/>
            <person name="Frishman D."/>
            <person name="Haase D."/>
            <person name="Lemcke K."/>
            <person name="Mewes H.-W."/>
            <person name="Stocker S."/>
            <person name="Zaccaria P."/>
            <person name="Bevan M."/>
            <person name="Wilson R.K."/>
            <person name="de la Bastide M."/>
            <person name="Habermann K."/>
            <person name="Parnell L."/>
            <person name="Dedhia N."/>
            <person name="Gnoj L."/>
            <person name="Schutz K."/>
            <person name="Huang E."/>
            <person name="Spiegel L."/>
            <person name="Sekhon M."/>
            <person name="Murray J."/>
            <person name="Sheet P."/>
            <person name="Cordes M."/>
            <person name="Abu-Threideh J."/>
            <person name="Stoneking T."/>
            <person name="Kalicki J."/>
            <person name="Graves T."/>
            <person name="Harmon G."/>
            <person name="Edwards J."/>
            <person name="Latreille P."/>
            <person name="Courtney L."/>
            <person name="Cloud J."/>
            <person name="Abbott A."/>
            <person name="Scott K."/>
            <person name="Johnson D."/>
            <person name="Minx P."/>
            <person name="Bentley D."/>
            <person name="Fulton B."/>
            <person name="Miller N."/>
            <person name="Greco T."/>
            <person name="Kemp K."/>
            <person name="Kramer J."/>
            <person name="Fulton L."/>
            <person name="Mardis E."/>
            <person name="Dante M."/>
            <person name="Pepin K."/>
            <person name="Hillier L.W."/>
            <person name="Nelson J."/>
            <person name="Spieth J."/>
            <person name="Ryan E."/>
            <person name="Andrews S."/>
            <person name="Geisel C."/>
            <person name="Layman D."/>
            <person name="Du H."/>
            <person name="Ali J."/>
            <person name="Berghoff A."/>
            <person name="Jones K."/>
            <person name="Drone K."/>
            <person name="Cotton M."/>
            <person name="Joshu C."/>
            <person name="Antonoiu B."/>
            <person name="Zidanic M."/>
            <person name="Strong C."/>
            <person name="Sun H."/>
            <person name="Lamar B."/>
            <person name="Yordan C."/>
            <person name="Ma P."/>
            <person name="Zhong J."/>
            <person name="Preston R."/>
            <person name="Vil D."/>
            <person name="Shekher M."/>
            <person name="Matero A."/>
            <person name="Shah R."/>
            <person name="Swaby I.K."/>
            <person name="O'Shaughnessy A."/>
            <person name="Rodriguez M."/>
            <person name="Hoffman J."/>
            <person name="Till S."/>
            <person name="Granat S."/>
            <person name="Shohdy N."/>
            <person name="Hasegawa A."/>
            <person name="Hameed A."/>
            <person name="Lodhi M."/>
            <person name="Johnson A."/>
            <person name="Chen E."/>
            <person name="Marra M.A."/>
            <person name="Martienssen R."/>
            <person name="McCombie W.R."/>
        </authorList>
    </citation>
    <scope>NUCLEOTIDE SEQUENCE [LARGE SCALE GENOMIC DNA]</scope>
    <source>
        <strain>cv. Columbia</strain>
    </source>
</reference>
<reference key="2">
    <citation type="journal article" date="2017" name="Plant J.">
        <title>Araport11: a complete reannotation of the Arabidopsis thaliana reference genome.</title>
        <authorList>
            <person name="Cheng C.Y."/>
            <person name="Krishnakumar V."/>
            <person name="Chan A.P."/>
            <person name="Thibaud-Nissen F."/>
            <person name="Schobel S."/>
            <person name="Town C.D."/>
        </authorList>
    </citation>
    <scope>GENOME REANNOTATION</scope>
    <source>
        <strain>cv. Columbia</strain>
    </source>
</reference>
<reference key="3">
    <citation type="journal article" date="2004" name="Genome Res.">
        <title>Whole genome sequence comparisons and 'full-length' cDNA sequences: a combined approach to evaluate and improve Arabidopsis genome annotation.</title>
        <authorList>
            <person name="Castelli V."/>
            <person name="Aury J.-M."/>
            <person name="Jaillon O."/>
            <person name="Wincker P."/>
            <person name="Clepet C."/>
            <person name="Menard M."/>
            <person name="Cruaud C."/>
            <person name="Quetier F."/>
            <person name="Scarpelli C."/>
            <person name="Schaechter V."/>
            <person name="Temple G."/>
            <person name="Caboche M."/>
            <person name="Weissenbach J."/>
            <person name="Salanoubat M."/>
        </authorList>
    </citation>
    <scope>NUCLEOTIDE SEQUENCE [LARGE SCALE MRNA] (ISOFORM 2)</scope>
    <source>
        <strain>cv. Columbia</strain>
    </source>
</reference>
<reference key="4">
    <citation type="submission" date="2006-10" db="EMBL/GenBank/DDBJ databases">
        <title>Arabidopsis ORF clones.</title>
        <authorList>
            <person name="Quinitio C."/>
            <person name="Chen H."/>
            <person name="Kim C.J."/>
            <person name="Shinn P."/>
            <person name="Ecker J.R."/>
        </authorList>
    </citation>
    <scope>NUCLEOTIDE SEQUENCE [LARGE SCALE MRNA] OF 145-484</scope>
    <source>
        <strain>cv. Columbia</strain>
    </source>
</reference>
<reference key="5">
    <citation type="journal article" date="2001" name="New Phytol.">
        <title>The CDPK superfamily of protein kinases.</title>
        <authorList>
            <person name="Harmon A.C."/>
            <person name="Gribskov M."/>
            <person name="Gubrium E."/>
            <person name="Harper J.F."/>
        </authorList>
    </citation>
    <scope>GENE FAMILY</scope>
    <scope>NOMENCLATURE</scope>
</reference>
<reference key="6">
    <citation type="journal article" date="2002" name="Plant Physiol.">
        <title>Calcium signaling through protein kinases. The Arabidopsis calcium-dependent protein kinase gene family.</title>
        <authorList>
            <person name="Cheng S.-H."/>
            <person name="Willmann M.R."/>
            <person name="Chen H.-C."/>
            <person name="Sheen J."/>
        </authorList>
    </citation>
    <scope>GENE FAMILY</scope>
    <scope>NOMENCLATURE</scope>
</reference>
<reference key="7">
    <citation type="journal article" date="2003" name="Plant Physiol.">
        <title>The Arabidopsis CDPK-SnRK superfamily of protein kinases.</title>
        <authorList>
            <person name="Hrabak E.M."/>
            <person name="Chan C.W.M."/>
            <person name="Gribskov M."/>
            <person name="Harper J.F."/>
            <person name="Choi J.H."/>
            <person name="Halford N."/>
            <person name="Kudla J."/>
            <person name="Luan S."/>
            <person name="Nimmo H.G."/>
            <person name="Sussman M.R."/>
            <person name="Thomas M."/>
            <person name="Walker-Simmons K."/>
            <person name="Zhu J.-K."/>
            <person name="Harmon A.C."/>
        </authorList>
    </citation>
    <scope>GENE FAMILY</scope>
    <scope>NOMENCLATURE</scope>
</reference>
<name>CDPKQ_ARATH</name>
<evidence type="ECO:0000250" key="1"/>
<evidence type="ECO:0000250" key="2">
    <source>
        <dbReference type="UniProtKB" id="Q9FKW4"/>
    </source>
</evidence>
<evidence type="ECO:0000255" key="3">
    <source>
        <dbReference type="PROSITE-ProRule" id="PRU00159"/>
    </source>
</evidence>
<evidence type="ECO:0000255" key="4">
    <source>
        <dbReference type="PROSITE-ProRule" id="PRU00448"/>
    </source>
</evidence>
<evidence type="ECO:0000255" key="5">
    <source>
        <dbReference type="PROSITE-ProRule" id="PRU10027"/>
    </source>
</evidence>
<evidence type="ECO:0000303" key="6">
    <source>
    </source>
</evidence>
<evidence type="ECO:0000305" key="7"/>
<feature type="chain" id="PRO_0000363348" description="Calcium-dependent protein kinase 26">
    <location>
        <begin position="1"/>
        <end position="484"/>
    </location>
</feature>
<feature type="domain" description="Protein kinase" evidence="3">
    <location>
        <begin position="24"/>
        <end position="282"/>
    </location>
</feature>
<feature type="domain" description="EF-hand 1" evidence="4">
    <location>
        <begin position="325"/>
        <end position="360"/>
    </location>
</feature>
<feature type="domain" description="EF-hand 2" evidence="4">
    <location>
        <begin position="361"/>
        <end position="396"/>
    </location>
</feature>
<feature type="domain" description="EF-hand 3" evidence="4">
    <location>
        <begin position="397"/>
        <end position="432"/>
    </location>
</feature>
<feature type="domain" description="EF-hand 4" evidence="4">
    <location>
        <begin position="436"/>
        <end position="466"/>
    </location>
</feature>
<feature type="region of interest" description="Autoinhibitory domain" evidence="1">
    <location>
        <begin position="288"/>
        <end position="318"/>
    </location>
</feature>
<feature type="active site" description="Proton acceptor" evidence="3 5">
    <location>
        <position position="148"/>
    </location>
</feature>
<feature type="binding site" evidence="3">
    <location>
        <begin position="30"/>
        <end position="38"/>
    </location>
    <ligand>
        <name>ATP</name>
        <dbReference type="ChEBI" id="CHEBI:30616"/>
    </ligand>
</feature>
<feature type="binding site" evidence="3">
    <location>
        <position position="53"/>
    </location>
    <ligand>
        <name>ATP</name>
        <dbReference type="ChEBI" id="CHEBI:30616"/>
    </ligand>
</feature>
<feature type="binding site" evidence="4">
    <location>
        <position position="338"/>
    </location>
    <ligand>
        <name>Ca(2+)</name>
        <dbReference type="ChEBI" id="CHEBI:29108"/>
        <label>1</label>
    </ligand>
</feature>
<feature type="binding site" evidence="4">
    <location>
        <position position="340"/>
    </location>
    <ligand>
        <name>Ca(2+)</name>
        <dbReference type="ChEBI" id="CHEBI:29108"/>
        <label>1</label>
    </ligand>
</feature>
<feature type="binding site" evidence="4">
    <location>
        <position position="342"/>
    </location>
    <ligand>
        <name>Ca(2+)</name>
        <dbReference type="ChEBI" id="CHEBI:29108"/>
        <label>1</label>
    </ligand>
</feature>
<feature type="binding site" evidence="4">
    <location>
        <position position="349"/>
    </location>
    <ligand>
        <name>Ca(2+)</name>
        <dbReference type="ChEBI" id="CHEBI:29108"/>
        <label>1</label>
    </ligand>
</feature>
<feature type="binding site" evidence="4">
    <location>
        <position position="374"/>
    </location>
    <ligand>
        <name>Ca(2+)</name>
        <dbReference type="ChEBI" id="CHEBI:29108"/>
        <label>2</label>
    </ligand>
</feature>
<feature type="binding site" evidence="4">
    <location>
        <position position="376"/>
    </location>
    <ligand>
        <name>Ca(2+)</name>
        <dbReference type="ChEBI" id="CHEBI:29108"/>
        <label>2</label>
    </ligand>
</feature>
<feature type="binding site" evidence="4">
    <location>
        <position position="378"/>
    </location>
    <ligand>
        <name>Ca(2+)</name>
        <dbReference type="ChEBI" id="CHEBI:29108"/>
        <label>2</label>
    </ligand>
</feature>
<feature type="binding site" evidence="4">
    <location>
        <position position="380"/>
    </location>
    <ligand>
        <name>Ca(2+)</name>
        <dbReference type="ChEBI" id="CHEBI:29108"/>
        <label>2</label>
    </ligand>
</feature>
<feature type="binding site" evidence="4">
    <location>
        <position position="385"/>
    </location>
    <ligand>
        <name>Ca(2+)</name>
        <dbReference type="ChEBI" id="CHEBI:29108"/>
        <label>2</label>
    </ligand>
</feature>
<feature type="binding site" evidence="4">
    <location>
        <position position="410"/>
    </location>
    <ligand>
        <name>Ca(2+)</name>
        <dbReference type="ChEBI" id="CHEBI:29108"/>
        <label>3</label>
    </ligand>
</feature>
<feature type="binding site" evidence="4">
    <location>
        <position position="412"/>
    </location>
    <ligand>
        <name>Ca(2+)</name>
        <dbReference type="ChEBI" id="CHEBI:29108"/>
        <label>3</label>
    </ligand>
</feature>
<feature type="binding site" evidence="4">
    <location>
        <position position="414"/>
    </location>
    <ligand>
        <name>Ca(2+)</name>
        <dbReference type="ChEBI" id="CHEBI:29108"/>
        <label>3</label>
    </ligand>
</feature>
<feature type="binding site" evidence="4">
    <location>
        <position position="416"/>
    </location>
    <ligand>
        <name>Ca(2+)</name>
        <dbReference type="ChEBI" id="CHEBI:29108"/>
        <label>3</label>
    </ligand>
</feature>
<feature type="binding site" evidence="4">
    <location>
        <position position="421"/>
    </location>
    <ligand>
        <name>Ca(2+)</name>
        <dbReference type="ChEBI" id="CHEBI:29108"/>
        <label>3</label>
    </ligand>
</feature>
<feature type="binding site" evidence="4">
    <location>
        <position position="444"/>
    </location>
    <ligand>
        <name>Ca(2+)</name>
        <dbReference type="ChEBI" id="CHEBI:29108"/>
        <label>4</label>
    </ligand>
</feature>
<feature type="binding site" evidence="4">
    <location>
        <position position="446"/>
    </location>
    <ligand>
        <name>Ca(2+)</name>
        <dbReference type="ChEBI" id="CHEBI:29108"/>
        <label>4</label>
    </ligand>
</feature>
<feature type="binding site" evidence="4">
    <location>
        <position position="448"/>
    </location>
    <ligand>
        <name>Ca(2+)</name>
        <dbReference type="ChEBI" id="CHEBI:29108"/>
        <label>4</label>
    </ligand>
</feature>
<feature type="binding site" evidence="4">
    <location>
        <position position="450"/>
    </location>
    <ligand>
        <name>Ca(2+)</name>
        <dbReference type="ChEBI" id="CHEBI:29108"/>
        <label>4</label>
    </ligand>
</feature>
<feature type="binding site" evidence="4">
    <location>
        <position position="455"/>
    </location>
    <ligand>
        <name>Ca(2+)</name>
        <dbReference type="ChEBI" id="CHEBI:29108"/>
        <label>4</label>
    </ligand>
</feature>
<feature type="modified residue" description="Phosphoserine" evidence="2">
    <location>
        <position position="188"/>
    </location>
</feature>
<feature type="splice variant" id="VSP_036291" description="In isoform 2." evidence="6">
    <location>
        <begin position="1"/>
        <end position="144"/>
    </location>
</feature>
<feature type="sequence conflict" description="In Ref. 3; BX827943." evidence="7" ref="3">
    <original>P</original>
    <variation>A</variation>
    <location>
        <position position="249"/>
    </location>
</feature>
<proteinExistence type="evidence at transcript level"/>
<accession>Q9SZM3</accession>
<accession>Q058J0</accession>
<organism>
    <name type="scientific">Arabidopsis thaliana</name>
    <name type="common">Mouse-ear cress</name>
    <dbReference type="NCBI Taxonomy" id="3702"/>
    <lineage>
        <taxon>Eukaryota</taxon>
        <taxon>Viridiplantae</taxon>
        <taxon>Streptophyta</taxon>
        <taxon>Embryophyta</taxon>
        <taxon>Tracheophyta</taxon>
        <taxon>Spermatophyta</taxon>
        <taxon>Magnoliopsida</taxon>
        <taxon>eudicotyledons</taxon>
        <taxon>Gunneridae</taxon>
        <taxon>Pentapetalae</taxon>
        <taxon>rosids</taxon>
        <taxon>malvids</taxon>
        <taxon>Brassicales</taxon>
        <taxon>Brassicaceae</taxon>
        <taxon>Camelineae</taxon>
        <taxon>Arabidopsis</taxon>
    </lineage>
</organism>
<gene>
    <name type="primary">CPK26</name>
    <name type="ordered locus">At4g38230</name>
    <name type="ORF">F20D10.350</name>
</gene>
<keyword id="KW-0025">Alternative splicing</keyword>
<keyword id="KW-0067">ATP-binding</keyword>
<keyword id="KW-0106">Calcium</keyword>
<keyword id="KW-0418">Kinase</keyword>
<keyword id="KW-0479">Metal-binding</keyword>
<keyword id="KW-0547">Nucleotide-binding</keyword>
<keyword id="KW-0597">Phosphoprotein</keyword>
<keyword id="KW-1185">Reference proteome</keyword>
<keyword id="KW-0677">Repeat</keyword>
<keyword id="KW-0723">Serine/threonine-protein kinase</keyword>
<keyword id="KW-0808">Transferase</keyword>
<sequence length="484" mass="54343">MKHSGGNQACYVLGQKTPSIRDLYSLGHKLGQGQFGTTYMCKEISTGREYACKSITKRKLISKEDVEDVRREIQIMHHLAGYKNIVTIKGAYEDPLYVHIVMELCSGGELFDRIIQRGHYSERKAAELIKIIVGVVEACHSLGVMHRDLKPENFLLVNKDDDFSLKAIDFGLSVFFKPGQIFEDVVGSPYYVAPEVLLKHYGPEADVWTAGVILYILVSGVPPFWAETQQGIFDAVLKGHIDFDSDPWPLISDSAKNLIRGMLCSRPSERLTAHQVLRHPWICENGVAPDRALDPAVLSRLKQFSAMNKLKQMALRVIAESLSEEEIAGLKEMFKAMDTDNSGAITFDELKAGLRRYGSTLKDTEIRDLMEAADIDKSGTIDYGEFIAATIHLNKLEREEHLLSAFRYFDKDGSGYITIDELQHACAEQGMSDVFLEDVIKEVDQDNDGRIDYGEFVAMMQKGIVGRTMRKSINMSIRNNAVSQ</sequence>